<comment type="function">
    <text evidence="2 3">Catalyzes the hydrolysis of glutamine to glutamate and ammonia as part of the biosynthesis of pyridoxal 5'-phosphate. The resulting ammonia molecule is channeled to the active site of Pdx1.</text>
</comment>
<comment type="catalytic activity">
    <reaction evidence="3 5">
        <text>aldehydo-D-ribose 5-phosphate + D-glyceraldehyde 3-phosphate + L-glutamine = pyridoxal 5'-phosphate + L-glutamate + phosphate + 3 H2O + H(+)</text>
        <dbReference type="Rhea" id="RHEA:31507"/>
        <dbReference type="ChEBI" id="CHEBI:15377"/>
        <dbReference type="ChEBI" id="CHEBI:15378"/>
        <dbReference type="ChEBI" id="CHEBI:29985"/>
        <dbReference type="ChEBI" id="CHEBI:43474"/>
        <dbReference type="ChEBI" id="CHEBI:58273"/>
        <dbReference type="ChEBI" id="CHEBI:58359"/>
        <dbReference type="ChEBI" id="CHEBI:59776"/>
        <dbReference type="ChEBI" id="CHEBI:597326"/>
        <dbReference type="EC" id="4.3.3.6"/>
    </reaction>
</comment>
<comment type="catalytic activity">
    <reaction evidence="2 3 5">
        <text>L-glutamine + H2O = L-glutamate + NH4(+)</text>
        <dbReference type="Rhea" id="RHEA:15889"/>
        <dbReference type="ChEBI" id="CHEBI:15377"/>
        <dbReference type="ChEBI" id="CHEBI:28938"/>
        <dbReference type="ChEBI" id="CHEBI:29985"/>
        <dbReference type="ChEBI" id="CHEBI:58359"/>
        <dbReference type="EC" id="3.5.1.2"/>
    </reaction>
</comment>
<comment type="biophysicochemical properties">
    <kinetics>
        <KM evidence="3">0.56 mM for L-glutamine</KM>
        <text evidence="3">kcat is 0.11 sec(-1) for L-glutamine.</text>
    </kinetics>
</comment>
<comment type="pathway">
    <text>Cofactor biosynthesis; pyridoxal 5'-phosphate biosynthesis.</text>
</comment>
<comment type="subunit">
    <text evidence="4 5">In the presence of Pdx1, forms a dodecamer of heterodimers. Only shows activity in the heterodimer.</text>
</comment>
<comment type="subcellular location">
    <subcellularLocation>
        <location evidence="3">Cytoplasm</location>
    </subcellularLocation>
</comment>
<comment type="alternative products">
    <event type="alternative splicing"/>
    <isoform>
        <id>Q8IIK4-1</id>
        <name>1</name>
        <sequence type="displayed"/>
    </isoform>
    <isoform>
        <id>Q8IIK4-2</id>
        <name>2</name>
        <sequence type="described" ref="VSP_061284"/>
    </isoform>
</comment>
<comment type="developmental stage">
    <text evidence="2">Expressed throughout development. Highest expression in segmenters stage followed by schizonts stage.</text>
</comment>
<comment type="similarity">
    <text evidence="7">Belongs to the glutaminase PdxT/SNO family.</text>
</comment>
<accession>Q8IIK4</accession>
<accession>A0A143ZYM6</accession>
<accession>A0A144A0A4</accession>
<accession>Q5ND68</accession>
<reference key="1">
    <citation type="journal article" date="2005" name="J. Biol. Chem.">
        <title>Analysis of the vitamin B6 biosynthesis pathway in the human malaria parasite Plasmodium falciparum.</title>
        <authorList>
            <person name="Wrenger C."/>
            <person name="Eschbach M.L."/>
            <person name="Muller I.B."/>
            <person name="Warnecke D."/>
            <person name="Walter R.D."/>
        </authorList>
    </citation>
    <scope>NUCLEOTIDE SEQUENCE [MRNA]</scope>
    <scope>FUNCTION</scope>
    <scope>CATALYTIC ACTIVITY</scope>
    <scope>DEVELOPMENTAL STAGE</scope>
    <source>
        <strain>3D7</strain>
    </source>
</reference>
<reference key="2">
    <citation type="journal article" date="2002" name="Nature">
        <title>Genome sequence of the human malaria parasite Plasmodium falciparum.</title>
        <authorList>
            <person name="Gardner M.J."/>
            <person name="Hall N."/>
            <person name="Fung E."/>
            <person name="White O."/>
            <person name="Berriman M."/>
            <person name="Hyman R.W."/>
            <person name="Carlton J.M."/>
            <person name="Pain A."/>
            <person name="Nelson K.E."/>
            <person name="Bowman S."/>
            <person name="Paulsen I.T."/>
            <person name="James K.D."/>
            <person name="Eisen J.A."/>
            <person name="Rutherford K.M."/>
            <person name="Salzberg S.L."/>
            <person name="Craig A."/>
            <person name="Kyes S."/>
            <person name="Chan M.-S."/>
            <person name="Nene V."/>
            <person name="Shallom S.J."/>
            <person name="Suh B."/>
            <person name="Peterson J."/>
            <person name="Angiuoli S."/>
            <person name="Pertea M."/>
            <person name="Allen J."/>
            <person name="Selengut J."/>
            <person name="Haft D."/>
            <person name="Mather M.W."/>
            <person name="Vaidya A.B."/>
            <person name="Martin D.M.A."/>
            <person name="Fairlamb A.H."/>
            <person name="Fraunholz M.J."/>
            <person name="Roos D.S."/>
            <person name="Ralph S.A."/>
            <person name="McFadden G.I."/>
            <person name="Cummings L.M."/>
            <person name="Subramanian G.M."/>
            <person name="Mungall C."/>
            <person name="Venter J.C."/>
            <person name="Carucci D.J."/>
            <person name="Hoffman S.L."/>
            <person name="Newbold C."/>
            <person name="Davis R.W."/>
            <person name="Fraser C.M."/>
            <person name="Barrell B.G."/>
        </authorList>
    </citation>
    <scope>NUCLEOTIDE SEQUENCE [LARGE SCALE GENOMIC DNA]</scope>
    <source>
        <strain>3D7</strain>
    </source>
</reference>
<reference key="3">
    <citation type="journal article" date="2008" name="PLoS ONE">
        <title>The assembly of the plasmodial PLP synthase complex follows a defined course.</title>
        <authorList>
            <person name="Mueller I.B."/>
            <person name="Knoeckel J."/>
            <person name="Groves M.R."/>
            <person name="Jordanova R."/>
            <person name="Ealick S.E."/>
            <person name="Walter R.D."/>
            <person name="Wrenger C."/>
        </authorList>
    </citation>
    <scope>MUTAGENESIS OF GLU-53 AND ARG-154</scope>
    <scope>SUBUNIT</scope>
    <source>
        <strain>3D7</strain>
    </source>
</reference>
<reference key="4">
    <citation type="journal article" date="2006" name="J. Biol. Chem.">
        <title>Vitamin B6 biosynthesis by the malaria parasite Plasmodium falciparum: biochemical and structural insights.</title>
        <authorList>
            <person name="Gengenbacher M."/>
            <person name="Fitzpatrick T.B."/>
            <person name="Raschle T."/>
            <person name="Flicker K."/>
            <person name="Sinning I."/>
            <person name="Muller S."/>
            <person name="Macheroux P."/>
            <person name="Tews I."/>
            <person name="Kappes B."/>
        </authorList>
    </citation>
    <scope>X-RAY CRYSTALLOGRAPHY (1.62 ANGSTROMS)</scope>
    <scope>FUNCTION</scope>
    <scope>CATALYTIC ACTIVITY</scope>
    <scope>SUBCELLULAR LOCATION</scope>
    <scope>BIOPHYSICOCHEMICAL PROPERTIES</scope>
    <source>
        <strain>3D7</strain>
    </source>
</reference>
<reference key="5">
    <citation type="journal article" date="2012" name="Structure">
        <title>Assembly of the eukaryotic PLP-synthase complex from Plasmodium and activation of the Pdx1 enzyme.</title>
        <authorList>
            <person name="Guedez G."/>
            <person name="Hipp K."/>
            <person name="Windeisen V."/>
            <person name="Derrer B."/>
            <person name="Gengenbacher M."/>
            <person name="Bottcher B."/>
            <person name="Sinning I."/>
            <person name="Kappes B."/>
            <person name="Tews I."/>
        </authorList>
    </citation>
    <scope>X-RAY CRYSTALLOGRAPHY (3.61 ANGSTROMS) OF 3-219 OF MUTANT ASN-196 IN COMPLEX WITH SUBUNIT PDX1 FROM P.BERGHEI</scope>
    <scope>CATALYTIC ACTIVITY</scope>
    <scope>SUBUNIT</scope>
    <scope>MUTAGENESIS OF HIS-196</scope>
    <source>
        <strain>3D7</strain>
    </source>
</reference>
<evidence type="ECO:0000250" key="1">
    <source>
        <dbReference type="UniProtKB" id="P37528"/>
    </source>
</evidence>
<evidence type="ECO:0000269" key="2">
    <source>
    </source>
</evidence>
<evidence type="ECO:0000269" key="3">
    <source>
    </source>
</evidence>
<evidence type="ECO:0000269" key="4">
    <source>
    </source>
</evidence>
<evidence type="ECO:0000269" key="5">
    <source>
    </source>
</evidence>
<evidence type="ECO:0000303" key="6">
    <source>
    </source>
</evidence>
<evidence type="ECO:0000305" key="7"/>
<evidence type="ECO:0007829" key="8">
    <source>
        <dbReference type="PDB" id="2ABW"/>
    </source>
</evidence>
<protein>
    <recommendedName>
        <fullName evidence="6">Pyridoxal 5'-phosphate synthase subunit PDX2</fullName>
        <shortName evidence="6">PfPDX2</shortName>
        <ecNumber evidence="3 5">4.3.3.6</ecNumber>
    </recommendedName>
    <alternativeName>
        <fullName>Pyridoxal 5'-phosphate synthase glutaminase subunit</fullName>
        <ecNumber evidence="2 3 5">3.5.1.2</ecNumber>
    </alternativeName>
</protein>
<organism>
    <name type="scientific">Plasmodium falciparum (isolate 3D7)</name>
    <dbReference type="NCBI Taxonomy" id="36329"/>
    <lineage>
        <taxon>Eukaryota</taxon>
        <taxon>Sar</taxon>
        <taxon>Alveolata</taxon>
        <taxon>Apicomplexa</taxon>
        <taxon>Aconoidasida</taxon>
        <taxon>Haemosporida</taxon>
        <taxon>Plasmodiidae</taxon>
        <taxon>Plasmodium</taxon>
        <taxon>Plasmodium (Laverania)</taxon>
    </lineage>
</organism>
<feature type="chain" id="PRO_0000431778" description="Pyridoxal 5'-phosphate synthase subunit PDX2">
    <location>
        <begin position="1"/>
        <end position="219"/>
    </location>
</feature>
<feature type="active site" description="Nucleophile" evidence="1">
    <location>
        <position position="87"/>
    </location>
</feature>
<feature type="active site" description="Charge relay system" evidence="1">
    <location>
        <position position="196"/>
    </location>
</feature>
<feature type="active site" description="Charge relay system" evidence="1">
    <location>
        <position position="198"/>
    </location>
</feature>
<feature type="binding site" evidence="1">
    <location>
        <begin position="52"/>
        <end position="54"/>
    </location>
    <ligand>
        <name>L-glutamine</name>
        <dbReference type="ChEBI" id="CHEBI:58359"/>
    </ligand>
</feature>
<feature type="binding site" evidence="1">
    <location>
        <position position="121"/>
    </location>
    <ligand>
        <name>L-glutamine</name>
        <dbReference type="ChEBI" id="CHEBI:58359"/>
    </ligand>
</feature>
<feature type="binding site" evidence="1">
    <location>
        <begin position="153"/>
        <end position="154"/>
    </location>
    <ligand>
        <name>L-glutamine</name>
        <dbReference type="ChEBI" id="CHEBI:58359"/>
    </ligand>
</feature>
<feature type="splice variant" id="VSP_061284" description="In isoform 2." evidence="7">
    <location>
        <begin position="128"/>
        <end position="165"/>
    </location>
</feature>
<feature type="mutagenesis site" description="No glutaminase activity." evidence="4">
    <original>E</original>
    <variation>Y</variation>
    <location>
        <position position="53"/>
    </location>
</feature>
<feature type="mutagenesis site" description="No glutaminase activity." evidence="4">
    <original>R</original>
    <variation>W</variation>
    <location>
        <position position="154"/>
    </location>
</feature>
<feature type="mutagenesis site" description="No activity." evidence="5">
    <original>H</original>
    <variation>N</variation>
    <location>
        <position position="196"/>
    </location>
</feature>
<feature type="strand" evidence="8">
    <location>
        <begin position="4"/>
        <end position="9"/>
    </location>
</feature>
<feature type="helix" evidence="8">
    <location>
        <begin position="16"/>
        <end position="23"/>
    </location>
</feature>
<feature type="strand" evidence="8">
    <location>
        <begin position="30"/>
        <end position="35"/>
    </location>
</feature>
<feature type="helix" evidence="8">
    <location>
        <begin position="38"/>
        <end position="42"/>
    </location>
</feature>
<feature type="strand" evidence="8">
    <location>
        <begin position="45"/>
        <end position="49"/>
    </location>
</feature>
<feature type="helix" evidence="8">
    <location>
        <begin position="54"/>
        <end position="60"/>
    </location>
</feature>
<feature type="helix" evidence="8">
    <location>
        <begin position="63"/>
        <end position="77"/>
    </location>
</feature>
<feature type="strand" evidence="8">
    <location>
        <begin position="83"/>
        <end position="86"/>
    </location>
</feature>
<feature type="helix" evidence="8">
    <location>
        <begin position="88"/>
        <end position="92"/>
    </location>
</feature>
<feature type="strand" evidence="8">
    <location>
        <begin position="94"/>
        <end position="98"/>
    </location>
</feature>
<feature type="helix" evidence="8">
    <location>
        <begin position="107"/>
        <end position="109"/>
    </location>
</feature>
<feature type="strand" evidence="8">
    <location>
        <begin position="115"/>
        <end position="120"/>
    </location>
</feature>
<feature type="strand" evidence="8">
    <location>
        <begin position="130"/>
        <end position="134"/>
    </location>
</feature>
<feature type="strand" evidence="8">
    <location>
        <begin position="149"/>
        <end position="154"/>
    </location>
</feature>
<feature type="strand" evidence="8">
    <location>
        <begin position="157"/>
        <end position="161"/>
    </location>
</feature>
<feature type="strand" evidence="8">
    <location>
        <begin position="167"/>
        <end position="174"/>
    </location>
</feature>
<feature type="turn" evidence="8">
    <location>
        <begin position="175"/>
        <end position="177"/>
    </location>
</feature>
<feature type="strand" evidence="8">
    <location>
        <begin position="178"/>
        <end position="187"/>
    </location>
</feature>
<feature type="strand" evidence="8">
    <location>
        <begin position="190"/>
        <end position="195"/>
    </location>
</feature>
<feature type="helix" evidence="8">
    <location>
        <begin position="197"/>
        <end position="199"/>
    </location>
</feature>
<feature type="helix" evidence="8">
    <location>
        <begin position="204"/>
        <end position="219"/>
    </location>
</feature>
<name>PDX2_PLAF7</name>
<gene>
    <name evidence="6" type="primary">PDX2</name>
    <name type="ORF">PF11_0169</name>
    <name type="ORF">PF3D7_1116200</name>
</gene>
<proteinExistence type="evidence at protein level"/>
<keyword id="KW-0002">3D-structure</keyword>
<keyword id="KW-0025">Alternative splicing</keyword>
<keyword id="KW-0963">Cytoplasm</keyword>
<keyword id="KW-0315">Glutamine amidotransferase</keyword>
<keyword id="KW-0378">Hydrolase</keyword>
<keyword id="KW-0456">Lyase</keyword>
<keyword id="KW-0663">Pyridoxal phosphate</keyword>
<keyword id="KW-1185">Reference proteome</keyword>
<dbReference type="EC" id="4.3.3.6" evidence="3 5"/>
<dbReference type="EC" id="3.5.1.2" evidence="2 3 5"/>
<dbReference type="EMBL" id="AJ871406">
    <property type="protein sequence ID" value="CAI39217.1"/>
    <property type="molecule type" value="mRNA"/>
</dbReference>
<dbReference type="EMBL" id="LN999945">
    <property type="protein sequence ID" value="CZT98822.1"/>
    <property type="molecule type" value="Genomic_DNA"/>
</dbReference>
<dbReference type="EMBL" id="LN999945">
    <property type="protein sequence ID" value="CZT98823.1"/>
    <property type="molecule type" value="Genomic_DNA"/>
</dbReference>
<dbReference type="RefSeq" id="XP_001347840.2">
    <molecule id="Q8IIK4-1"/>
    <property type="nucleotide sequence ID" value="XM_001347804.2"/>
</dbReference>
<dbReference type="PDB" id="2ABW">
    <property type="method" value="X-ray"/>
    <property type="resolution" value="1.62 A"/>
    <property type="chains" value="A/B=1-219"/>
</dbReference>
<dbReference type="PDB" id="4ADS">
    <property type="method" value="X-ray"/>
    <property type="resolution" value="3.61 A"/>
    <property type="chains" value="G/H/I/J/K/L=3-219"/>
</dbReference>
<dbReference type="PDBsum" id="2ABW"/>
<dbReference type="PDBsum" id="4ADS"/>
<dbReference type="SMR" id="Q8IIK4"/>
<dbReference type="FunCoup" id="Q8IIK4">
    <property type="interactions" value="68"/>
</dbReference>
<dbReference type="IntAct" id="Q8IIK4">
    <property type="interactions" value="1"/>
</dbReference>
<dbReference type="STRING" id="36329.Q8IIK4"/>
<dbReference type="MEROPS" id="C26.A35"/>
<dbReference type="PaxDb" id="5833-PF11_0169"/>
<dbReference type="EnsemblProtists" id="CZT98822">
    <molecule id="Q8IIK4-2"/>
    <property type="protein sequence ID" value="CZT98822"/>
    <property type="gene ID" value="PF3D7_1116200.2"/>
</dbReference>
<dbReference type="EnsemblProtists" id="CZT98823">
    <molecule id="Q8IIK4-1"/>
    <property type="protein sequence ID" value="CZT98823"/>
    <property type="gene ID" value="PF3D7_1116200.1"/>
</dbReference>
<dbReference type="KEGG" id="pfa:PF3D7_1116200.1"/>
<dbReference type="VEuPathDB" id="PlasmoDB:PF3D7_1116200"/>
<dbReference type="HOGENOM" id="CLU_069674_0_0_1"/>
<dbReference type="InParanoid" id="Q8IIK4"/>
<dbReference type="OMA" id="GMIMLAD"/>
<dbReference type="OrthoDB" id="2039at2759"/>
<dbReference type="PhylomeDB" id="Q8IIK4"/>
<dbReference type="UniPathway" id="UPA00245"/>
<dbReference type="EvolutionaryTrace" id="Q8IIK4"/>
<dbReference type="Proteomes" id="UP000001450">
    <property type="component" value="Chromosome 11"/>
</dbReference>
<dbReference type="GO" id="GO:0005829">
    <property type="term" value="C:cytosol"/>
    <property type="evidence" value="ECO:0000318"/>
    <property type="project" value="GO_Central"/>
</dbReference>
<dbReference type="GO" id="GO:1903600">
    <property type="term" value="C:glutaminase complex"/>
    <property type="evidence" value="ECO:0000318"/>
    <property type="project" value="GO_Central"/>
</dbReference>
<dbReference type="GO" id="GO:0004359">
    <property type="term" value="F:glutaminase activity"/>
    <property type="evidence" value="ECO:0000314"/>
    <property type="project" value="GeneDB"/>
</dbReference>
<dbReference type="GO" id="GO:0036381">
    <property type="term" value="F:pyridoxal 5'-phosphate synthase (glutamine hydrolysing) activity"/>
    <property type="evidence" value="ECO:0007669"/>
    <property type="project" value="UniProtKB-EC"/>
</dbReference>
<dbReference type="GO" id="GO:0042823">
    <property type="term" value="P:pyridoxal phosphate biosynthetic process"/>
    <property type="evidence" value="ECO:0000318"/>
    <property type="project" value="GO_Central"/>
</dbReference>
<dbReference type="GO" id="GO:0008614">
    <property type="term" value="P:pyridoxine metabolic process"/>
    <property type="evidence" value="ECO:0000318"/>
    <property type="project" value="GO_Central"/>
</dbReference>
<dbReference type="GO" id="GO:0000304">
    <property type="term" value="P:response to singlet oxygen"/>
    <property type="evidence" value="ECO:0000314"/>
    <property type="project" value="GeneDB"/>
</dbReference>
<dbReference type="GO" id="GO:0042819">
    <property type="term" value="P:vitamin B6 biosynthetic process"/>
    <property type="evidence" value="ECO:0000314"/>
    <property type="project" value="GeneDB"/>
</dbReference>
<dbReference type="CDD" id="cd01749">
    <property type="entry name" value="GATase1_PB"/>
    <property type="match status" value="1"/>
</dbReference>
<dbReference type="FunFam" id="3.40.50.880:FF:000088">
    <property type="entry name" value="Pyridoxine biosynthesis protein PDX2"/>
    <property type="match status" value="1"/>
</dbReference>
<dbReference type="Gene3D" id="3.40.50.880">
    <property type="match status" value="1"/>
</dbReference>
<dbReference type="InterPro" id="IPR029062">
    <property type="entry name" value="Class_I_gatase-like"/>
</dbReference>
<dbReference type="InterPro" id="IPR002161">
    <property type="entry name" value="PdxT/SNO"/>
</dbReference>
<dbReference type="InterPro" id="IPR021196">
    <property type="entry name" value="PdxT/SNO_CS"/>
</dbReference>
<dbReference type="NCBIfam" id="TIGR03800">
    <property type="entry name" value="PLP_synth_Pdx2"/>
    <property type="match status" value="1"/>
</dbReference>
<dbReference type="PANTHER" id="PTHR31559">
    <property type="entry name" value="PYRIDOXAL 5'-PHOSPHATE SYNTHASE SUBUNIT SNO"/>
    <property type="match status" value="1"/>
</dbReference>
<dbReference type="PANTHER" id="PTHR31559:SF0">
    <property type="entry name" value="PYRIDOXAL 5'-PHOSPHATE SYNTHASE SUBUNIT SNO1-RELATED"/>
    <property type="match status" value="1"/>
</dbReference>
<dbReference type="Pfam" id="PF01174">
    <property type="entry name" value="SNO"/>
    <property type="match status" value="1"/>
</dbReference>
<dbReference type="PIRSF" id="PIRSF005639">
    <property type="entry name" value="Glut_amidoT_SNO"/>
    <property type="match status" value="1"/>
</dbReference>
<dbReference type="SUPFAM" id="SSF52317">
    <property type="entry name" value="Class I glutamine amidotransferase-like"/>
    <property type="match status" value="1"/>
</dbReference>
<dbReference type="PROSITE" id="PS01236">
    <property type="entry name" value="PDXT_SNO_1"/>
    <property type="match status" value="1"/>
</dbReference>
<dbReference type="PROSITE" id="PS51130">
    <property type="entry name" value="PDXT_SNO_2"/>
    <property type="match status" value="1"/>
</dbReference>
<sequence>MSEITIGVLSLQGDFEPHINHFIKLQIPSLNIIQVRNVHDLGLCDGLVIPGGESTTVRRCCAYENDTLYNALVHFIHVLKKPIWGTCAGCILLSKNVENIKLYSNFGNKFSFGGLDITICRNFYGSQNDSFICSLNIISDSSAFKKDLTAACIRAPYIREILSDEVKVLATFSHESYGPNIIAAVEQNNCLGTVFHPELLPHTAFQQYFYEKVKNYKYS</sequence>